<evidence type="ECO:0000250" key="1">
    <source>
        <dbReference type="UniProtKB" id="Q3TBL6"/>
    </source>
</evidence>
<evidence type="ECO:0000256" key="2">
    <source>
        <dbReference type="SAM" id="MobiDB-lite"/>
    </source>
</evidence>
<evidence type="ECO:0000269" key="3">
    <source>
    </source>
</evidence>
<evidence type="ECO:0000269" key="4">
    <source>
    </source>
</evidence>
<evidence type="ECO:0000305" key="5"/>
<evidence type="ECO:0007829" key="6">
    <source>
        <dbReference type="PDB" id="4Q9V"/>
    </source>
</evidence>
<sequence>MGKPRQNPSTLVSTLCEAEPKGKLWVNGYAGTQGTRDATLQTRLIPLSFHLQRGKGLAAPLSALSAPRLPERPADGRVAVDAQPAARSMDSDSGEQSEGEPVTAAGPDVFSSKSLALQAQKKILSKIASKTVANMLIDDTSSEIFDELYKVTKEHTHNKKEAHKIMKDLIKVAIKIGILYRNNQFSQEELVIVEKFRKKLNQTAMTIVSFYEVEYTFDRNVLSNLLHECKDLVHELVQRHLTPRTHGRINHVFNHFADVEFLSTLYSLDGDCRPNLKRICEGINKLLDEKVL</sequence>
<name>TP8L3_HUMAN</name>
<organism>
    <name type="scientific">Homo sapiens</name>
    <name type="common">Human</name>
    <dbReference type="NCBI Taxonomy" id="9606"/>
    <lineage>
        <taxon>Eukaryota</taxon>
        <taxon>Metazoa</taxon>
        <taxon>Chordata</taxon>
        <taxon>Craniata</taxon>
        <taxon>Vertebrata</taxon>
        <taxon>Euteleostomi</taxon>
        <taxon>Mammalia</taxon>
        <taxon>Eutheria</taxon>
        <taxon>Euarchontoglires</taxon>
        <taxon>Primates</taxon>
        <taxon>Haplorrhini</taxon>
        <taxon>Catarrhini</taxon>
        <taxon>Hominidae</taxon>
        <taxon>Homo</taxon>
    </lineage>
</organism>
<keyword id="KW-0002">3D-structure</keyword>
<keyword id="KW-1003">Cell membrane</keyword>
<keyword id="KW-0963">Cytoplasm</keyword>
<keyword id="KW-0445">Lipid transport</keyword>
<keyword id="KW-0472">Membrane</keyword>
<keyword id="KW-1267">Proteomics identification</keyword>
<keyword id="KW-1185">Reference proteome</keyword>
<keyword id="KW-0813">Transport</keyword>
<feature type="chain" id="PRO_0000331424" description="Tumor necrosis factor alpha-induced protein 8-like protein 3">
    <location>
        <begin position="1"/>
        <end position="292"/>
    </location>
</feature>
<feature type="region of interest" description="Disordered" evidence="2">
    <location>
        <begin position="81"/>
        <end position="107"/>
    </location>
</feature>
<feature type="region of interest" description="Binding to phosphoinositides" evidence="1">
    <location>
        <begin position="109"/>
        <end position="292"/>
    </location>
</feature>
<feature type="sequence variant" id="VAR_042860" description="In dbSNP:rs17647084.">
    <original>A</original>
    <variation>T</variation>
    <location>
        <position position="38"/>
    </location>
</feature>
<feature type="helix" evidence="6">
    <location>
        <begin position="112"/>
        <end position="135"/>
    </location>
</feature>
<feature type="helix" evidence="6">
    <location>
        <begin position="139"/>
        <end position="156"/>
    </location>
</feature>
<feature type="helix" evidence="6">
    <location>
        <begin position="159"/>
        <end position="181"/>
    </location>
</feature>
<feature type="helix" evidence="6">
    <location>
        <begin position="187"/>
        <end position="212"/>
    </location>
</feature>
<feature type="helix" evidence="6">
    <location>
        <begin position="214"/>
        <end position="216"/>
    </location>
</feature>
<feature type="helix" evidence="6">
    <location>
        <begin position="219"/>
        <end position="237"/>
    </location>
</feature>
<feature type="helix" evidence="6">
    <location>
        <begin position="245"/>
        <end position="257"/>
    </location>
</feature>
<feature type="helix" evidence="6">
    <location>
        <begin position="259"/>
        <end position="266"/>
    </location>
</feature>
<feature type="helix" evidence="6">
    <location>
        <begin position="273"/>
        <end position="288"/>
    </location>
</feature>
<gene>
    <name type="primary">TNFAIP8L3</name>
    <name type="synonym">TIPE3</name>
</gene>
<protein>
    <recommendedName>
        <fullName>Tumor necrosis factor alpha-induced protein 8-like protein 3</fullName>
        <shortName>TNF alpha-induced protein 8-like protein 3</shortName>
        <shortName>TNFAIP8-like protein 3</shortName>
    </recommendedName>
</protein>
<reference key="1">
    <citation type="submission" date="2004-01" db="EMBL/GenBank/DDBJ databases">
        <authorList>
            <person name="Chen S."/>
            <person name="Guo J.H."/>
            <person name="Yu L."/>
        </authorList>
    </citation>
    <scope>NUCLEOTIDE SEQUENCE [LARGE SCALE MRNA]</scope>
</reference>
<reference key="2">
    <citation type="submission" date="2005-07" db="EMBL/GenBank/DDBJ databases">
        <authorList>
            <person name="Mural R.J."/>
            <person name="Istrail S."/>
            <person name="Sutton G.G."/>
            <person name="Florea L."/>
            <person name="Halpern A.L."/>
            <person name="Mobarry C.M."/>
            <person name="Lippert R."/>
            <person name="Walenz B."/>
            <person name="Shatkay H."/>
            <person name="Dew I."/>
            <person name="Miller J.R."/>
            <person name="Flanigan M.J."/>
            <person name="Edwards N.J."/>
            <person name="Bolanos R."/>
            <person name="Fasulo D."/>
            <person name="Halldorsson B.V."/>
            <person name="Hannenhalli S."/>
            <person name="Turner R."/>
            <person name="Yooseph S."/>
            <person name="Lu F."/>
            <person name="Nusskern D.R."/>
            <person name="Shue B.C."/>
            <person name="Zheng X.H."/>
            <person name="Zhong F."/>
            <person name="Delcher A.L."/>
            <person name="Huson D.H."/>
            <person name="Kravitz S.A."/>
            <person name="Mouchard L."/>
            <person name="Reinert K."/>
            <person name="Remington K.A."/>
            <person name="Clark A.G."/>
            <person name="Waterman M.S."/>
            <person name="Eichler E.E."/>
            <person name="Adams M.D."/>
            <person name="Hunkapiller M.W."/>
            <person name="Myers E.W."/>
            <person name="Venter J.C."/>
        </authorList>
    </citation>
    <scope>NUCLEOTIDE SEQUENCE [LARGE SCALE GENOMIC DNA]</scope>
</reference>
<reference key="3">
    <citation type="journal article" date="2004" name="Nat. Genet.">
        <title>Complete sequencing and characterization of 21,243 full-length human cDNAs.</title>
        <authorList>
            <person name="Ota T."/>
            <person name="Suzuki Y."/>
            <person name="Nishikawa T."/>
            <person name="Otsuki T."/>
            <person name="Sugiyama T."/>
            <person name="Irie R."/>
            <person name="Wakamatsu A."/>
            <person name="Hayashi K."/>
            <person name="Sato H."/>
            <person name="Nagai K."/>
            <person name="Kimura K."/>
            <person name="Makita H."/>
            <person name="Sekine M."/>
            <person name="Obayashi M."/>
            <person name="Nishi T."/>
            <person name="Shibahara T."/>
            <person name="Tanaka T."/>
            <person name="Ishii S."/>
            <person name="Yamamoto J."/>
            <person name="Saito K."/>
            <person name="Kawai Y."/>
            <person name="Isono Y."/>
            <person name="Nakamura Y."/>
            <person name="Nagahari K."/>
            <person name="Murakami K."/>
            <person name="Yasuda T."/>
            <person name="Iwayanagi T."/>
            <person name="Wagatsuma M."/>
            <person name="Shiratori A."/>
            <person name="Sudo H."/>
            <person name="Hosoiri T."/>
            <person name="Kaku Y."/>
            <person name="Kodaira H."/>
            <person name="Kondo H."/>
            <person name="Sugawara M."/>
            <person name="Takahashi M."/>
            <person name="Kanda K."/>
            <person name="Yokoi T."/>
            <person name="Furuya T."/>
            <person name="Kikkawa E."/>
            <person name="Omura Y."/>
            <person name="Abe K."/>
            <person name="Kamihara K."/>
            <person name="Katsuta N."/>
            <person name="Sato K."/>
            <person name="Tanikawa M."/>
            <person name="Yamazaki M."/>
            <person name="Ninomiya K."/>
            <person name="Ishibashi T."/>
            <person name="Yamashita H."/>
            <person name="Murakawa K."/>
            <person name="Fujimori K."/>
            <person name="Tanai H."/>
            <person name="Kimata M."/>
            <person name="Watanabe M."/>
            <person name="Hiraoka S."/>
            <person name="Chiba Y."/>
            <person name="Ishida S."/>
            <person name="Ono Y."/>
            <person name="Takiguchi S."/>
            <person name="Watanabe S."/>
            <person name="Yosida M."/>
            <person name="Hotuta T."/>
            <person name="Kusano J."/>
            <person name="Kanehori K."/>
            <person name="Takahashi-Fujii A."/>
            <person name="Hara H."/>
            <person name="Tanase T.-O."/>
            <person name="Nomura Y."/>
            <person name="Togiya S."/>
            <person name="Komai F."/>
            <person name="Hara R."/>
            <person name="Takeuchi K."/>
            <person name="Arita M."/>
            <person name="Imose N."/>
            <person name="Musashino K."/>
            <person name="Yuuki H."/>
            <person name="Oshima A."/>
            <person name="Sasaki N."/>
            <person name="Aotsuka S."/>
            <person name="Yoshikawa Y."/>
            <person name="Matsunawa H."/>
            <person name="Ichihara T."/>
            <person name="Shiohata N."/>
            <person name="Sano S."/>
            <person name="Moriya S."/>
            <person name="Momiyama H."/>
            <person name="Satoh N."/>
            <person name="Takami S."/>
            <person name="Terashima Y."/>
            <person name="Suzuki O."/>
            <person name="Nakagawa S."/>
            <person name="Senoh A."/>
            <person name="Mizoguchi H."/>
            <person name="Goto Y."/>
            <person name="Shimizu F."/>
            <person name="Wakebe H."/>
            <person name="Hishigaki H."/>
            <person name="Watanabe T."/>
            <person name="Sugiyama A."/>
            <person name="Takemoto M."/>
            <person name="Kawakami B."/>
            <person name="Yamazaki M."/>
            <person name="Watanabe K."/>
            <person name="Kumagai A."/>
            <person name="Itakura S."/>
            <person name="Fukuzumi Y."/>
            <person name="Fujimori Y."/>
            <person name="Komiyama M."/>
            <person name="Tashiro H."/>
            <person name="Tanigami A."/>
            <person name="Fujiwara T."/>
            <person name="Ono T."/>
            <person name="Yamada K."/>
            <person name="Fujii Y."/>
            <person name="Ozaki K."/>
            <person name="Hirao M."/>
            <person name="Ohmori Y."/>
            <person name="Kawabata A."/>
            <person name="Hikiji T."/>
            <person name="Kobatake N."/>
            <person name="Inagaki H."/>
            <person name="Ikema Y."/>
            <person name="Okamoto S."/>
            <person name="Okitani R."/>
            <person name="Kawakami T."/>
            <person name="Noguchi S."/>
            <person name="Itoh T."/>
            <person name="Shigeta K."/>
            <person name="Senba T."/>
            <person name="Matsumura K."/>
            <person name="Nakajima Y."/>
            <person name="Mizuno T."/>
            <person name="Morinaga M."/>
            <person name="Sasaki M."/>
            <person name="Togashi T."/>
            <person name="Oyama M."/>
            <person name="Hata H."/>
            <person name="Watanabe M."/>
            <person name="Komatsu T."/>
            <person name="Mizushima-Sugano J."/>
            <person name="Satoh T."/>
            <person name="Shirai Y."/>
            <person name="Takahashi Y."/>
            <person name="Nakagawa K."/>
            <person name="Okumura K."/>
            <person name="Nagase T."/>
            <person name="Nomura N."/>
            <person name="Kikuchi H."/>
            <person name="Masuho Y."/>
            <person name="Yamashita R."/>
            <person name="Nakai K."/>
            <person name="Yada T."/>
            <person name="Nakamura Y."/>
            <person name="Ohara O."/>
            <person name="Isogai T."/>
            <person name="Sugano S."/>
        </authorList>
    </citation>
    <scope>NUCLEOTIDE SEQUENCE [LARGE SCALE MRNA] OF 58-292</scope>
    <source>
        <tissue>Amygdala</tissue>
    </source>
</reference>
<reference key="4">
    <citation type="journal article" date="2004" name="Genome Res.">
        <title>The status, quality, and expansion of the NIH full-length cDNA project: the Mammalian Gene Collection (MGC).</title>
        <authorList>
            <consortium name="The MGC Project Team"/>
        </authorList>
    </citation>
    <scope>NUCLEOTIDE SEQUENCE [LARGE SCALE MRNA] OF 81-292</scope>
</reference>
<reference key="5">
    <citation type="journal article" date="2015" name="J. Histochem. Cytochem.">
        <title>Identical expression profiling of human and murine TIPE3 protein reveals links to its functions.</title>
        <authorList>
            <person name="Cui J."/>
            <person name="Hao C."/>
            <person name="Zhang W."/>
            <person name="Shao J."/>
            <person name="Zhang N."/>
            <person name="Zhang G."/>
            <person name="Liu S."/>
        </authorList>
    </citation>
    <scope>TISSUE SPECIFICITY</scope>
    <scope>SUBCELLULAR LOCATION</scope>
</reference>
<reference key="6">
    <citation type="journal article" date="2014" name="Cancer Cell">
        <title>TIPE3 is the transfer protein of lipid second messengers that promote cancer.</title>
        <authorList>
            <person name="Fayngerts S.A."/>
            <person name="Wu J."/>
            <person name="Oxley C.L."/>
            <person name="Liu X."/>
            <person name="Vourekas A."/>
            <person name="Cathopoulis T."/>
            <person name="Wang Z."/>
            <person name="Cui J."/>
            <person name="Liu S."/>
            <person name="Sun H."/>
            <person name="Lemmon M.A."/>
            <person name="Zhang L."/>
            <person name="Shi Y."/>
            <person name="Chen Y.H."/>
        </authorList>
    </citation>
    <scope>X-RAY CRYSTALLOGRAPHY (2.30 ANGSTROMS) OF 109-292</scope>
    <scope>TISSUE SPECIFICITY</scope>
</reference>
<accession>Q5GJ75</accession>
<accession>Q6ZWD1</accession>
<comment type="function">
    <text evidence="1">Acts as a lipid transfer protein. Preferentially captures and shuttles two lipid second messengers, i.e., phosphatidylinositol 4,5- bisphosphate and phosphatidylinositol 3,4,5-trisphosphate and increases their levels in the plasma membrane. Additionally, may also function as a lipid-presenting protein to enhance the activity of the PI3K-AKT and MEK-ERK pathways. May act as a regulator of tumorigenesis through its activation of phospholipid signaling.</text>
</comment>
<comment type="interaction">
    <interactant intactId="EBI-14222571">
        <id>Q5GJ75</id>
    </interactant>
    <interactant intactId="EBI-947308">
        <id>Q9Y3M2</id>
        <label>CBY1</label>
    </interactant>
    <organismsDiffer>false</organismsDiffer>
    <experiments>3</experiments>
</comment>
<comment type="interaction">
    <interactant intactId="EBI-14222571">
        <id>Q5GJ75</id>
    </interactant>
    <interactant intactId="EBI-727004">
        <id>O00560</id>
        <label>SDCBP</label>
    </interactant>
    <organismsDiffer>false</organismsDiffer>
    <experiments>3</experiments>
</comment>
<comment type="subcellular location">
    <subcellularLocation>
        <location evidence="4">Cytoplasm</location>
    </subcellularLocation>
    <subcellularLocation>
        <location evidence="1">Cell membrane</location>
    </subcellularLocation>
    <text evidence="1">On PDGF activation, translocates from cytoplasm to plasma membrane.</text>
</comment>
<comment type="tissue specificity">
    <text evidence="3 4">Widely expressed (at protein level) (PubMed:25479791). Highly expressed in most carcinoma cell lines (PubMed:25242044, PubMed:25479791).</text>
</comment>
<comment type="similarity">
    <text evidence="5">Belongs to the TNFAIP8 family.</text>
</comment>
<comment type="caution">
    <text evidence="5">It is uncertain whether Met-1 or Met-89 is the initiator.</text>
</comment>
<comment type="sequence caution" evidence="5">
    <conflict type="erroneous initiation">
        <sequence resource="EMBL-CDS" id="AAI27702"/>
    </conflict>
</comment>
<comment type="sequence caution" evidence="5">
    <conflict type="erroneous initiation">
        <sequence resource="EMBL-CDS" id="AAI27703"/>
    </conflict>
</comment>
<comment type="sequence caution" evidence="5">
    <conflict type="erroneous initiation">
        <sequence resource="EMBL-CDS" id="BAC85572"/>
    </conflict>
</comment>
<comment type="sequence caution" evidence="5">
    <conflict type="erroneous gene model prediction">
        <sequence resource="EMBL-CDS" id="EAW77412"/>
    </conflict>
</comment>
<proteinExistence type="evidence at protein level"/>
<dbReference type="EMBL" id="AY517501">
    <property type="protein sequence ID" value="AAS76642.1"/>
    <property type="molecule type" value="mRNA"/>
</dbReference>
<dbReference type="EMBL" id="AK123281">
    <property type="protein sequence ID" value="BAC85572.1"/>
    <property type="status" value="ALT_INIT"/>
    <property type="molecule type" value="mRNA"/>
</dbReference>
<dbReference type="EMBL" id="CH471082">
    <property type="protein sequence ID" value="EAW77412.1"/>
    <property type="status" value="ALT_SEQ"/>
    <property type="molecule type" value="Genomic_DNA"/>
</dbReference>
<dbReference type="EMBL" id="BC127701">
    <property type="protein sequence ID" value="AAI27702.1"/>
    <property type="status" value="ALT_INIT"/>
    <property type="molecule type" value="mRNA"/>
</dbReference>
<dbReference type="EMBL" id="BC127702">
    <property type="protein sequence ID" value="AAI27703.1"/>
    <property type="status" value="ALT_INIT"/>
    <property type="molecule type" value="mRNA"/>
</dbReference>
<dbReference type="CCDS" id="CCDS32241.1"/>
<dbReference type="RefSeq" id="NP_001298104.1">
    <property type="nucleotide sequence ID" value="NM_001311175.1"/>
</dbReference>
<dbReference type="RefSeq" id="NP_997264.2">
    <property type="nucleotide sequence ID" value="NM_207381.4"/>
</dbReference>
<dbReference type="PDB" id="4Q9V">
    <property type="method" value="X-ray"/>
    <property type="resolution" value="2.30 A"/>
    <property type="chains" value="A/B=109-292"/>
</dbReference>
<dbReference type="PDBsum" id="4Q9V"/>
<dbReference type="SMR" id="Q5GJ75"/>
<dbReference type="BioGRID" id="132560">
    <property type="interactions" value="3"/>
</dbReference>
<dbReference type="FunCoup" id="Q5GJ75">
    <property type="interactions" value="1224"/>
</dbReference>
<dbReference type="IntAct" id="Q5GJ75">
    <property type="interactions" value="2"/>
</dbReference>
<dbReference type="STRING" id="9606.ENSP00000328016"/>
<dbReference type="iPTMnet" id="Q5GJ75"/>
<dbReference type="PhosphoSitePlus" id="Q5GJ75"/>
<dbReference type="BioMuta" id="TNFAIP8L3"/>
<dbReference type="DMDM" id="74707829"/>
<dbReference type="jPOST" id="Q5GJ75"/>
<dbReference type="MassIVE" id="Q5GJ75"/>
<dbReference type="PaxDb" id="9606-ENSP00000328016"/>
<dbReference type="PeptideAtlas" id="Q5GJ75"/>
<dbReference type="ProteomicsDB" id="62836"/>
<dbReference type="Pumba" id="Q5GJ75"/>
<dbReference type="Antibodypedia" id="57338">
    <property type="antibodies" value="86 antibodies from 21 providers"/>
</dbReference>
<dbReference type="DNASU" id="388121"/>
<dbReference type="Ensembl" id="ENST00000327536.5">
    <property type="protein sequence ID" value="ENSP00000328016.5"/>
    <property type="gene ID" value="ENSG00000183578.8"/>
</dbReference>
<dbReference type="GeneID" id="388121"/>
<dbReference type="KEGG" id="hsa:388121"/>
<dbReference type="UCSC" id="uc001zyy.5">
    <property type="organism name" value="human"/>
</dbReference>
<dbReference type="AGR" id="HGNC:20620"/>
<dbReference type="CTD" id="388121"/>
<dbReference type="DisGeNET" id="388121"/>
<dbReference type="GeneCards" id="TNFAIP8L3"/>
<dbReference type="HGNC" id="HGNC:20620">
    <property type="gene designation" value="TNFAIP8L3"/>
</dbReference>
<dbReference type="HPA" id="ENSG00000183578">
    <property type="expression patterns" value="Tissue enhanced (endometrium, smooth muscle)"/>
</dbReference>
<dbReference type="MIM" id="616438">
    <property type="type" value="gene"/>
</dbReference>
<dbReference type="neXtProt" id="NX_Q5GJ75"/>
<dbReference type="OpenTargets" id="ENSG00000183578"/>
<dbReference type="PharmGKB" id="PA142670724"/>
<dbReference type="VEuPathDB" id="HostDB:ENSG00000183578"/>
<dbReference type="eggNOG" id="ENOG502QRE6">
    <property type="taxonomic scope" value="Eukaryota"/>
</dbReference>
<dbReference type="GeneTree" id="ENSGT00390000003488"/>
<dbReference type="HOGENOM" id="CLU_085918_0_0_1"/>
<dbReference type="InParanoid" id="Q5GJ75"/>
<dbReference type="OrthoDB" id="10055976at2759"/>
<dbReference type="PAN-GO" id="Q5GJ75">
    <property type="GO annotations" value="1 GO annotation based on evolutionary models"/>
</dbReference>
<dbReference type="PhylomeDB" id="Q5GJ75"/>
<dbReference type="TreeFam" id="TF323415"/>
<dbReference type="PathwayCommons" id="Q5GJ75"/>
<dbReference type="Reactome" id="R-HSA-1483255">
    <property type="pathway name" value="PI Metabolism"/>
</dbReference>
<dbReference type="SignaLink" id="Q5GJ75"/>
<dbReference type="BioGRID-ORCS" id="388121">
    <property type="hits" value="7 hits in 1149 CRISPR screens"/>
</dbReference>
<dbReference type="EvolutionaryTrace" id="Q5GJ75"/>
<dbReference type="GenomeRNAi" id="388121"/>
<dbReference type="Pharos" id="Q5GJ75">
    <property type="development level" value="Tbio"/>
</dbReference>
<dbReference type="PRO" id="PR:Q5GJ75"/>
<dbReference type="Proteomes" id="UP000005640">
    <property type="component" value="Chromosome 15"/>
</dbReference>
<dbReference type="RNAct" id="Q5GJ75">
    <property type="molecule type" value="protein"/>
</dbReference>
<dbReference type="Bgee" id="ENSG00000183578">
    <property type="expression patterns" value="Expressed in left uterine tube and 94 other cell types or tissues"/>
</dbReference>
<dbReference type="ExpressionAtlas" id="Q5GJ75">
    <property type="expression patterns" value="baseline and differential"/>
</dbReference>
<dbReference type="GO" id="GO:0005737">
    <property type="term" value="C:cytoplasm"/>
    <property type="evidence" value="ECO:0000314"/>
    <property type="project" value="UniProtKB"/>
</dbReference>
<dbReference type="GO" id="GO:0005829">
    <property type="term" value="C:cytosol"/>
    <property type="evidence" value="ECO:0000314"/>
    <property type="project" value="HPA"/>
</dbReference>
<dbReference type="GO" id="GO:0005654">
    <property type="term" value="C:nucleoplasm"/>
    <property type="evidence" value="ECO:0000314"/>
    <property type="project" value="HPA"/>
</dbReference>
<dbReference type="GO" id="GO:0005886">
    <property type="term" value="C:plasma membrane"/>
    <property type="evidence" value="ECO:0000250"/>
    <property type="project" value="UniProtKB"/>
</dbReference>
<dbReference type="GO" id="GO:0035091">
    <property type="term" value="F:phosphatidylinositol binding"/>
    <property type="evidence" value="ECO:0000250"/>
    <property type="project" value="UniProtKB"/>
</dbReference>
<dbReference type="GO" id="GO:0008526">
    <property type="term" value="F:phosphatidylinositol transfer activity"/>
    <property type="evidence" value="ECO:0000250"/>
    <property type="project" value="UniProtKB"/>
</dbReference>
<dbReference type="GO" id="GO:1902633">
    <property type="term" value="P:1-phosphatidyl-1D-myo-inositol 4,5-bisphosphate metabolic process"/>
    <property type="evidence" value="ECO:0000250"/>
    <property type="project" value="UniProtKB"/>
</dbReference>
<dbReference type="GO" id="GO:0006644">
    <property type="term" value="P:phospholipid metabolic process"/>
    <property type="evidence" value="ECO:0000304"/>
    <property type="project" value="Reactome"/>
</dbReference>
<dbReference type="GO" id="GO:0015914">
    <property type="term" value="P:phospholipid transport"/>
    <property type="evidence" value="ECO:0000250"/>
    <property type="project" value="UniProtKB"/>
</dbReference>
<dbReference type="GO" id="GO:0070374">
    <property type="term" value="P:positive regulation of ERK1 and ERK2 cascade"/>
    <property type="evidence" value="ECO:0000250"/>
    <property type="project" value="UniProtKB"/>
</dbReference>
<dbReference type="GO" id="GO:0042981">
    <property type="term" value="P:regulation of apoptotic process"/>
    <property type="evidence" value="ECO:0007669"/>
    <property type="project" value="InterPro"/>
</dbReference>
<dbReference type="FunFam" id="1.20.1440.160:FF:000001">
    <property type="entry name" value="Tumor necrosis factor alpha-induced protein 8-like 1"/>
    <property type="match status" value="1"/>
</dbReference>
<dbReference type="Gene3D" id="1.20.1440.160">
    <property type="entry name" value="Tumor necrosis factor alpha-induced protein 8-like"/>
    <property type="match status" value="1"/>
</dbReference>
<dbReference type="InterPro" id="IPR008477">
    <property type="entry name" value="TNFAIP8-like"/>
</dbReference>
<dbReference type="InterPro" id="IPR038355">
    <property type="entry name" value="TNFAIP8_sf"/>
</dbReference>
<dbReference type="PANTHER" id="PTHR12757:SF5">
    <property type="entry name" value="TUMOR NECROSIS FACTOR ALPHA-INDUCED PROTEIN 8-LIKE PROTEIN 3"/>
    <property type="match status" value="1"/>
</dbReference>
<dbReference type="PANTHER" id="PTHR12757">
    <property type="entry name" value="TUMOR NECROSIS FACTOR INDUCED PROTEIN"/>
    <property type="match status" value="1"/>
</dbReference>
<dbReference type="Pfam" id="PF05527">
    <property type="entry name" value="DUF758"/>
    <property type="match status" value="1"/>
</dbReference>